<keyword id="KW-0031">Aminopeptidase</keyword>
<keyword id="KW-0963">Cytoplasm</keyword>
<keyword id="KW-0378">Hydrolase</keyword>
<keyword id="KW-0464">Manganese</keyword>
<keyword id="KW-0479">Metal-binding</keyword>
<keyword id="KW-0645">Protease</keyword>
<keyword id="KW-1185">Reference proteome</keyword>
<evidence type="ECO:0000255" key="1">
    <source>
        <dbReference type="HAMAP-Rule" id="MF_00181"/>
    </source>
</evidence>
<organism>
    <name type="scientific">Campylobacter jejuni subsp. jejuni serotype O:2 (strain ATCC 700819 / NCTC 11168)</name>
    <dbReference type="NCBI Taxonomy" id="192222"/>
    <lineage>
        <taxon>Bacteria</taxon>
        <taxon>Pseudomonadati</taxon>
        <taxon>Campylobacterota</taxon>
        <taxon>Epsilonproteobacteria</taxon>
        <taxon>Campylobacterales</taxon>
        <taxon>Campylobacteraceae</taxon>
        <taxon>Campylobacter</taxon>
    </lineage>
</organism>
<protein>
    <recommendedName>
        <fullName evidence="1">Probable cytosol aminopeptidase</fullName>
        <ecNumber evidence="1">3.4.11.1</ecNumber>
    </recommendedName>
    <alternativeName>
        <fullName evidence="1">Leucine aminopeptidase</fullName>
        <shortName evidence="1">LAP</shortName>
        <ecNumber evidence="1">3.4.11.10</ecNumber>
    </alternativeName>
    <alternativeName>
        <fullName evidence="1">Leucyl aminopeptidase</fullName>
    </alternativeName>
</protein>
<comment type="function">
    <text evidence="1">Presumably involved in the processing and regular turnover of intracellular proteins. Catalyzes the removal of unsubstituted N-terminal amino acids from various peptides.</text>
</comment>
<comment type="catalytic activity">
    <reaction evidence="1">
        <text>Release of an N-terminal amino acid, Xaa-|-Yaa-, in which Xaa is preferably Leu, but may be other amino acids including Pro although not Arg or Lys, and Yaa may be Pro. Amino acid amides and methyl esters are also readily hydrolyzed, but rates on arylamides are exceedingly low.</text>
        <dbReference type="EC" id="3.4.11.1"/>
    </reaction>
</comment>
<comment type="catalytic activity">
    <reaction evidence="1">
        <text>Release of an N-terminal amino acid, preferentially leucine, but not glutamic or aspartic acids.</text>
        <dbReference type="EC" id="3.4.11.10"/>
    </reaction>
</comment>
<comment type="cofactor">
    <cofactor evidence="1">
        <name>Mn(2+)</name>
        <dbReference type="ChEBI" id="CHEBI:29035"/>
    </cofactor>
    <text evidence="1">Binds 2 manganese ions per subunit.</text>
</comment>
<comment type="subcellular location">
    <subcellularLocation>
        <location evidence="1">Cytoplasm</location>
    </subcellularLocation>
</comment>
<comment type="similarity">
    <text evidence="1">Belongs to the peptidase M17 family.</text>
</comment>
<proteinExistence type="inferred from homology"/>
<sequence length="483" mass="53694">MKFELNDKKLDAIKADFELVFIQDKNLKIFNKEKDFFKLNNYKGEGALLDLNNKKLYLELKSLAYEDIRLSLCTAYKTLEKLNIKSVKLPSIIGDCVVRSFASLVEGVLFGAYKFDKYKSEKKTSTLEKFIISNEELNGKKFNKDEAKIGLERGEILANATNFTKNIVNEIPEIYTPLKMAEDAQNLAKENKNIICKIYDEKFLAKEKMNAFLAVNHASVHPPRLIHLSYKAKNAKKRVVFVGKGLTYDSGGLSLKPADFMLTMKADKSGAAAAMGIIKAVAELALDLEVHCILGATENMIGGNAYKPDDVLISREGVSIEVRNTDAEGRLVLADCLSFAQDLKPDLLIDMATLTGACVVGLGEFTSAIMGNNEELQNDFYLSSKKSGEYTTILHFNPHLRELIKSNIADVSNTASSRYGGAITAGLFLDKFIRKEYKDKWLHLDIAGPAYTEKSWGYSSFGAGGAGVRMCVNYLIQILRKAK</sequence>
<dbReference type="EC" id="3.4.11.1" evidence="1"/>
<dbReference type="EC" id="3.4.11.10" evidence="1"/>
<dbReference type="EMBL" id="AL111168">
    <property type="protein sequence ID" value="CAL35049.1"/>
    <property type="molecule type" value="Genomic_DNA"/>
</dbReference>
<dbReference type="PIR" id="H81366">
    <property type="entry name" value="H81366"/>
</dbReference>
<dbReference type="RefSeq" id="WP_002853317.1">
    <property type="nucleotide sequence ID" value="NZ_SZUC01000001.1"/>
</dbReference>
<dbReference type="RefSeq" id="YP_002344327.1">
    <property type="nucleotide sequence ID" value="NC_002163.1"/>
</dbReference>
<dbReference type="SMR" id="Q9PP04"/>
<dbReference type="IntAct" id="Q9PP04">
    <property type="interactions" value="7"/>
</dbReference>
<dbReference type="STRING" id="192222.Cj0929"/>
<dbReference type="MEROPS" id="M17.016"/>
<dbReference type="PaxDb" id="192222-Cj0929"/>
<dbReference type="EnsemblBacteria" id="CAL35049">
    <property type="protein sequence ID" value="CAL35049"/>
    <property type="gene ID" value="Cj0929"/>
</dbReference>
<dbReference type="GeneID" id="904492"/>
<dbReference type="KEGG" id="cje:Cj0929"/>
<dbReference type="PATRIC" id="fig|192222.6.peg.913"/>
<dbReference type="eggNOG" id="COG0260">
    <property type="taxonomic scope" value="Bacteria"/>
</dbReference>
<dbReference type="HOGENOM" id="CLU_013734_6_1_7"/>
<dbReference type="OrthoDB" id="9809354at2"/>
<dbReference type="Proteomes" id="UP000000799">
    <property type="component" value="Chromosome"/>
</dbReference>
<dbReference type="GO" id="GO:0005737">
    <property type="term" value="C:cytoplasm"/>
    <property type="evidence" value="ECO:0007669"/>
    <property type="project" value="UniProtKB-SubCell"/>
</dbReference>
<dbReference type="GO" id="GO:0030145">
    <property type="term" value="F:manganese ion binding"/>
    <property type="evidence" value="ECO:0007669"/>
    <property type="project" value="UniProtKB-UniRule"/>
</dbReference>
<dbReference type="GO" id="GO:0070006">
    <property type="term" value="F:metalloaminopeptidase activity"/>
    <property type="evidence" value="ECO:0007669"/>
    <property type="project" value="InterPro"/>
</dbReference>
<dbReference type="GO" id="GO:0006508">
    <property type="term" value="P:proteolysis"/>
    <property type="evidence" value="ECO:0007669"/>
    <property type="project" value="UniProtKB-KW"/>
</dbReference>
<dbReference type="CDD" id="cd00433">
    <property type="entry name" value="Peptidase_M17"/>
    <property type="match status" value="1"/>
</dbReference>
<dbReference type="Gene3D" id="3.40.220.10">
    <property type="entry name" value="Leucine Aminopeptidase, subunit E, domain 1"/>
    <property type="match status" value="1"/>
</dbReference>
<dbReference type="Gene3D" id="3.40.630.10">
    <property type="entry name" value="Zn peptidases"/>
    <property type="match status" value="1"/>
</dbReference>
<dbReference type="HAMAP" id="MF_00181">
    <property type="entry name" value="Cytosol_peptidase_M17"/>
    <property type="match status" value="1"/>
</dbReference>
<dbReference type="InterPro" id="IPR011356">
    <property type="entry name" value="Leucine_aapep/pepB"/>
</dbReference>
<dbReference type="InterPro" id="IPR043472">
    <property type="entry name" value="Macro_dom-like"/>
</dbReference>
<dbReference type="InterPro" id="IPR000819">
    <property type="entry name" value="Peptidase_M17_C"/>
</dbReference>
<dbReference type="InterPro" id="IPR023042">
    <property type="entry name" value="Peptidase_M17_leu_NH2_pept"/>
</dbReference>
<dbReference type="NCBIfam" id="NF002081">
    <property type="entry name" value="PRK00913.3-3"/>
    <property type="match status" value="1"/>
</dbReference>
<dbReference type="PANTHER" id="PTHR11963:SF23">
    <property type="entry name" value="CYTOSOL AMINOPEPTIDASE"/>
    <property type="match status" value="1"/>
</dbReference>
<dbReference type="PANTHER" id="PTHR11963">
    <property type="entry name" value="LEUCINE AMINOPEPTIDASE-RELATED"/>
    <property type="match status" value="1"/>
</dbReference>
<dbReference type="Pfam" id="PF00883">
    <property type="entry name" value="Peptidase_M17"/>
    <property type="match status" value="1"/>
</dbReference>
<dbReference type="PRINTS" id="PR00481">
    <property type="entry name" value="LAMNOPPTDASE"/>
</dbReference>
<dbReference type="SUPFAM" id="SSF52949">
    <property type="entry name" value="Macro domain-like"/>
    <property type="match status" value="1"/>
</dbReference>
<dbReference type="SUPFAM" id="SSF53187">
    <property type="entry name" value="Zn-dependent exopeptidases"/>
    <property type="match status" value="1"/>
</dbReference>
<dbReference type="PROSITE" id="PS00631">
    <property type="entry name" value="CYTOSOL_AP"/>
    <property type="match status" value="1"/>
</dbReference>
<feature type="chain" id="PRO_0000165734" description="Probable cytosol aminopeptidase">
    <location>
        <begin position="1"/>
        <end position="483"/>
    </location>
</feature>
<feature type="active site" evidence="1">
    <location>
        <position position="256"/>
    </location>
</feature>
<feature type="active site" evidence="1">
    <location>
        <position position="330"/>
    </location>
</feature>
<feature type="binding site" evidence="1">
    <location>
        <position position="244"/>
    </location>
    <ligand>
        <name>Mn(2+)</name>
        <dbReference type="ChEBI" id="CHEBI:29035"/>
        <label>2</label>
    </ligand>
</feature>
<feature type="binding site" evidence="1">
    <location>
        <position position="249"/>
    </location>
    <ligand>
        <name>Mn(2+)</name>
        <dbReference type="ChEBI" id="CHEBI:29035"/>
        <label>1</label>
    </ligand>
</feature>
<feature type="binding site" evidence="1">
    <location>
        <position position="249"/>
    </location>
    <ligand>
        <name>Mn(2+)</name>
        <dbReference type="ChEBI" id="CHEBI:29035"/>
        <label>2</label>
    </ligand>
</feature>
<feature type="binding site" evidence="1">
    <location>
        <position position="267"/>
    </location>
    <ligand>
        <name>Mn(2+)</name>
        <dbReference type="ChEBI" id="CHEBI:29035"/>
        <label>2</label>
    </ligand>
</feature>
<feature type="binding site" evidence="1">
    <location>
        <position position="326"/>
    </location>
    <ligand>
        <name>Mn(2+)</name>
        <dbReference type="ChEBI" id="CHEBI:29035"/>
        <label>1</label>
    </ligand>
</feature>
<feature type="binding site" evidence="1">
    <location>
        <position position="328"/>
    </location>
    <ligand>
        <name>Mn(2+)</name>
        <dbReference type="ChEBI" id="CHEBI:29035"/>
        <label>1</label>
    </ligand>
</feature>
<feature type="binding site" evidence="1">
    <location>
        <position position="328"/>
    </location>
    <ligand>
        <name>Mn(2+)</name>
        <dbReference type="ChEBI" id="CHEBI:29035"/>
        <label>2</label>
    </ligand>
</feature>
<accession>Q9PP04</accession>
<accession>Q0P9X0</accession>
<reference key="1">
    <citation type="journal article" date="2000" name="Nature">
        <title>The genome sequence of the food-borne pathogen Campylobacter jejuni reveals hypervariable sequences.</title>
        <authorList>
            <person name="Parkhill J."/>
            <person name="Wren B.W."/>
            <person name="Mungall K.L."/>
            <person name="Ketley J.M."/>
            <person name="Churcher C.M."/>
            <person name="Basham D."/>
            <person name="Chillingworth T."/>
            <person name="Davies R.M."/>
            <person name="Feltwell T."/>
            <person name="Holroyd S."/>
            <person name="Jagels K."/>
            <person name="Karlyshev A.V."/>
            <person name="Moule S."/>
            <person name="Pallen M.J."/>
            <person name="Penn C.W."/>
            <person name="Quail M.A."/>
            <person name="Rajandream M.A."/>
            <person name="Rutherford K.M."/>
            <person name="van Vliet A.H.M."/>
            <person name="Whitehead S."/>
            <person name="Barrell B.G."/>
        </authorList>
    </citation>
    <scope>NUCLEOTIDE SEQUENCE [LARGE SCALE GENOMIC DNA]</scope>
    <source>
        <strain>ATCC 700819 / NCTC 11168</strain>
    </source>
</reference>
<gene>
    <name evidence="1" type="primary">pepA</name>
    <name type="ordered locus">Cj0929</name>
</gene>
<name>AMPA_CAMJE</name>